<proteinExistence type="inferred from homology"/>
<organism>
    <name type="scientific">Hydrogenobaculum sp. (strain Y04AAS1)</name>
    <dbReference type="NCBI Taxonomy" id="380749"/>
    <lineage>
        <taxon>Bacteria</taxon>
        <taxon>Pseudomonadati</taxon>
        <taxon>Aquificota</taxon>
        <taxon>Aquificia</taxon>
        <taxon>Aquificales</taxon>
        <taxon>Aquificaceae</taxon>
        <taxon>Hydrogenobaculum</taxon>
    </lineage>
</organism>
<sequence>MDISLFDYDLPEELIAKYPVNPRHSAKLMVLDRKSSNITHSTFWHIDEFLEEGDLLIFNDTKVLPARLLGKKKGIENSNVEILLLRHLENEKWEALVGGKNIKPGLVIEISYDFEAIVESQIEKSKFLVLLKAKNQNQIEAINKYGKIPIPPYLGRDEEPIDKEFYQTVFAKKEFSVAAPTASLHFSNELLEKLKKKVNIDFVTLHVSYGTFKPVTVQNIEEHKVDEEYIEVSESLIKNIKKTKKMCKRVIAVGTTVTRALETAIDKPYFGFTDLYIKPGFKFKVLDGFITNFHLPKSSLLILVSAFCNEENLDGREFILKSYKEAVKHKYRFYSYGDGMLIL</sequence>
<feature type="chain" id="PRO_1000094785" description="S-adenosylmethionine:tRNA ribosyltransferase-isomerase">
    <location>
        <begin position="1"/>
        <end position="343"/>
    </location>
</feature>
<reference key="1">
    <citation type="journal article" date="2009" name="J. Bacteriol.">
        <title>Complete and draft genome sequences of six members of the Aquificales.</title>
        <authorList>
            <person name="Reysenbach A.-L."/>
            <person name="Hamamura N."/>
            <person name="Podar M."/>
            <person name="Griffiths E."/>
            <person name="Ferreira S."/>
            <person name="Hochstein R."/>
            <person name="Heidelberg J."/>
            <person name="Johnson J."/>
            <person name="Mead D."/>
            <person name="Pohorille A."/>
            <person name="Sarmiento M."/>
            <person name="Schweighofer K."/>
            <person name="Seshadri R."/>
            <person name="Voytek M.A."/>
        </authorList>
    </citation>
    <scope>NUCLEOTIDE SEQUENCE [LARGE SCALE GENOMIC DNA]</scope>
    <source>
        <strain>Y04AAS1</strain>
    </source>
</reference>
<keyword id="KW-0963">Cytoplasm</keyword>
<keyword id="KW-0671">Queuosine biosynthesis</keyword>
<keyword id="KW-0949">S-adenosyl-L-methionine</keyword>
<keyword id="KW-0808">Transferase</keyword>
<dbReference type="EC" id="2.4.99.17" evidence="1"/>
<dbReference type="EMBL" id="CP001130">
    <property type="protein sequence ID" value="ACG57193.1"/>
    <property type="molecule type" value="Genomic_DNA"/>
</dbReference>
<dbReference type="RefSeq" id="WP_012513549.1">
    <property type="nucleotide sequence ID" value="NC_011126.1"/>
</dbReference>
<dbReference type="SMR" id="B4U7T2"/>
<dbReference type="STRING" id="380749.HY04AAS1_0506"/>
<dbReference type="KEGG" id="hya:HY04AAS1_0506"/>
<dbReference type="eggNOG" id="COG0809">
    <property type="taxonomic scope" value="Bacteria"/>
</dbReference>
<dbReference type="HOGENOM" id="CLU_039110_1_0_0"/>
<dbReference type="OrthoDB" id="9805933at2"/>
<dbReference type="UniPathway" id="UPA00392"/>
<dbReference type="GO" id="GO:0005737">
    <property type="term" value="C:cytoplasm"/>
    <property type="evidence" value="ECO:0007669"/>
    <property type="project" value="UniProtKB-SubCell"/>
</dbReference>
<dbReference type="GO" id="GO:0051075">
    <property type="term" value="F:S-adenosylmethionine:tRNA ribosyltransferase-isomerase activity"/>
    <property type="evidence" value="ECO:0007669"/>
    <property type="project" value="UniProtKB-EC"/>
</dbReference>
<dbReference type="GO" id="GO:0008616">
    <property type="term" value="P:queuosine biosynthetic process"/>
    <property type="evidence" value="ECO:0007669"/>
    <property type="project" value="UniProtKB-UniRule"/>
</dbReference>
<dbReference type="GO" id="GO:0002099">
    <property type="term" value="P:tRNA wobble guanine modification"/>
    <property type="evidence" value="ECO:0007669"/>
    <property type="project" value="TreeGrafter"/>
</dbReference>
<dbReference type="Gene3D" id="2.40.10.240">
    <property type="entry name" value="QueA-like"/>
    <property type="match status" value="1"/>
</dbReference>
<dbReference type="Gene3D" id="3.40.1780.10">
    <property type="entry name" value="QueA-like"/>
    <property type="match status" value="1"/>
</dbReference>
<dbReference type="HAMAP" id="MF_00113">
    <property type="entry name" value="QueA"/>
    <property type="match status" value="1"/>
</dbReference>
<dbReference type="InterPro" id="IPR003699">
    <property type="entry name" value="QueA"/>
</dbReference>
<dbReference type="InterPro" id="IPR042118">
    <property type="entry name" value="QueA_dom1"/>
</dbReference>
<dbReference type="InterPro" id="IPR042119">
    <property type="entry name" value="QueA_dom2"/>
</dbReference>
<dbReference type="InterPro" id="IPR036100">
    <property type="entry name" value="QueA_sf"/>
</dbReference>
<dbReference type="NCBIfam" id="NF001140">
    <property type="entry name" value="PRK00147.1"/>
    <property type="match status" value="1"/>
</dbReference>
<dbReference type="NCBIfam" id="TIGR00113">
    <property type="entry name" value="queA"/>
    <property type="match status" value="1"/>
</dbReference>
<dbReference type="PANTHER" id="PTHR30307">
    <property type="entry name" value="S-ADENOSYLMETHIONINE:TRNA RIBOSYLTRANSFERASE-ISOMERASE"/>
    <property type="match status" value="1"/>
</dbReference>
<dbReference type="PANTHER" id="PTHR30307:SF0">
    <property type="entry name" value="S-ADENOSYLMETHIONINE:TRNA RIBOSYLTRANSFERASE-ISOMERASE"/>
    <property type="match status" value="1"/>
</dbReference>
<dbReference type="Pfam" id="PF02547">
    <property type="entry name" value="Queuosine_synth"/>
    <property type="match status" value="1"/>
</dbReference>
<dbReference type="SUPFAM" id="SSF111337">
    <property type="entry name" value="QueA-like"/>
    <property type="match status" value="1"/>
</dbReference>
<accession>B4U7T2</accession>
<evidence type="ECO:0000255" key="1">
    <source>
        <dbReference type="HAMAP-Rule" id="MF_00113"/>
    </source>
</evidence>
<gene>
    <name evidence="1" type="primary">queA</name>
    <name type="ordered locus">HY04AAS1_0506</name>
</gene>
<comment type="function">
    <text evidence="1">Transfers and isomerizes the ribose moiety from AdoMet to the 7-aminomethyl group of 7-deazaguanine (preQ1-tRNA) to give epoxyqueuosine (oQ-tRNA).</text>
</comment>
<comment type="catalytic activity">
    <reaction evidence="1">
        <text>7-aminomethyl-7-carbaguanosine(34) in tRNA + S-adenosyl-L-methionine = epoxyqueuosine(34) in tRNA + adenine + L-methionine + 2 H(+)</text>
        <dbReference type="Rhea" id="RHEA:32155"/>
        <dbReference type="Rhea" id="RHEA-COMP:10342"/>
        <dbReference type="Rhea" id="RHEA-COMP:18582"/>
        <dbReference type="ChEBI" id="CHEBI:15378"/>
        <dbReference type="ChEBI" id="CHEBI:16708"/>
        <dbReference type="ChEBI" id="CHEBI:57844"/>
        <dbReference type="ChEBI" id="CHEBI:59789"/>
        <dbReference type="ChEBI" id="CHEBI:82833"/>
        <dbReference type="ChEBI" id="CHEBI:194443"/>
        <dbReference type="EC" id="2.4.99.17"/>
    </reaction>
</comment>
<comment type="pathway">
    <text evidence="1">tRNA modification; tRNA-queuosine biosynthesis.</text>
</comment>
<comment type="subunit">
    <text evidence="1">Monomer.</text>
</comment>
<comment type="subcellular location">
    <subcellularLocation>
        <location evidence="1">Cytoplasm</location>
    </subcellularLocation>
</comment>
<comment type="similarity">
    <text evidence="1">Belongs to the QueA family.</text>
</comment>
<name>QUEA_HYDS0</name>
<protein>
    <recommendedName>
        <fullName evidence="1">S-adenosylmethionine:tRNA ribosyltransferase-isomerase</fullName>
        <ecNumber evidence="1">2.4.99.17</ecNumber>
    </recommendedName>
    <alternativeName>
        <fullName evidence="1">Queuosine biosynthesis protein QueA</fullName>
    </alternativeName>
</protein>